<organism>
    <name type="scientific">Strongylocentrotus purpuratus</name>
    <name type="common">Purple sea urchin</name>
    <dbReference type="NCBI Taxonomy" id="7668"/>
    <lineage>
        <taxon>Eukaryota</taxon>
        <taxon>Metazoa</taxon>
        <taxon>Echinodermata</taxon>
        <taxon>Eleutherozoa</taxon>
        <taxon>Echinozoa</taxon>
        <taxon>Echinoidea</taxon>
        <taxon>Euechinoidea</taxon>
        <taxon>Echinacea</taxon>
        <taxon>Camarodonta</taxon>
        <taxon>Echinidea</taxon>
        <taxon>Strongylocentrotidae</taxon>
        <taxon>Strongylocentrotus</taxon>
    </lineage>
</organism>
<comment type="function">
    <text>May be an adhesion molecule involved in gastrulation of the sea urchin embryo.</text>
</comment>
<comment type="tissue specificity">
    <text>First expressed in the vegetal plate and progressively the expression becomes restricted to a subset of endodermal cells as development proceeds.</text>
</comment>
<comment type="developmental stage">
    <text>First expressed just prior to gastrulation.</text>
</comment>
<proteinExistence type="evidence at transcript level"/>
<dbReference type="EMBL" id="M27296">
    <property type="protein sequence ID" value="AAA30046.1"/>
    <property type="molecule type" value="mRNA"/>
</dbReference>
<dbReference type="PIR" id="A43738">
    <property type="entry name" value="A43738"/>
</dbReference>
<dbReference type="STRING" id="7668.P13665"/>
<dbReference type="GlyCosmos" id="P13665">
    <property type="glycosylation" value="1 site, No reported glycans"/>
</dbReference>
<dbReference type="InParanoid" id="P13665"/>
<dbReference type="Proteomes" id="UP000007110">
    <property type="component" value="Unassembled WGS sequence"/>
</dbReference>
<dbReference type="GO" id="GO:0007155">
    <property type="term" value="P:cell adhesion"/>
    <property type="evidence" value="ECO:0007669"/>
    <property type="project" value="UniProtKB-KW"/>
</dbReference>
<dbReference type="GO" id="GO:0007369">
    <property type="term" value="P:gastrulation"/>
    <property type="evidence" value="ECO:0007669"/>
    <property type="project" value="UniProtKB-KW"/>
</dbReference>
<keyword id="KW-0130">Cell adhesion</keyword>
<keyword id="KW-0217">Developmental protein</keyword>
<keyword id="KW-0306">Gastrulation</keyword>
<keyword id="KW-0325">Glycoprotein</keyword>
<keyword id="KW-1185">Reference proteome</keyword>
<keyword id="KW-0677">Repeat</keyword>
<gene>
    <name type="primary">ENDO16</name>
</gene>
<reference key="1">
    <citation type="journal article" date="1989" name="Dev. Biol.">
        <title>Endo16, a lineage-specific protein of the sea urchin embryo, is first expressed just prior to gastrulation.</title>
        <authorList>
            <person name="Nocente-Mcgrath C."/>
            <person name="Brenner C.A."/>
            <person name="Ernst S.G."/>
        </authorList>
    </citation>
    <scope>NUCLEOTIDE SEQUENCE [MRNA]</scope>
</reference>
<protein>
    <recommendedName>
        <fullName>Protein ENDO16</fullName>
    </recommendedName>
</protein>
<evidence type="ECO:0000255" key="1"/>
<evidence type="ECO:0000256" key="2">
    <source>
        <dbReference type="SAM" id="MobiDB-lite"/>
    </source>
</evidence>
<accession>P13665</accession>
<name>EN16_STRPU</name>
<sequence>SEYASELAQADNNVLAPAPLTFGGRGDIRTSKAVKSISESTVVSNYDEDNFRSCCALFGEAQLKCFQMHYSPNAPSSQMESEGSANPSTIGSVSEGYVSESQGQESERSESEGSEGEDSEETEGAEEPHEQMESEGGDQEESEGAEQPQEQMESEGQEPESEEDVDSGEITDGSDMNMPGPGSSDGGVPLGLTEVDEQTSDGEEPEEPEEPGGEQGPHEQMESEGEGNESEEEEVEEPQEVIESEGQQSESEDPEKEEEEEERSG</sequence>
<feature type="chain" id="PRO_0000086970" description="Protein ENDO16">
    <location>
        <begin position="1" status="less than"/>
        <end position="265" status="greater than"/>
    </location>
</feature>
<feature type="repeat" description="1">
    <location>
        <begin position="75"/>
        <end position="94"/>
    </location>
</feature>
<feature type="repeat" description="2">
    <location>
        <begin position="105"/>
        <end position="124"/>
    </location>
</feature>
<feature type="repeat" description="3">
    <location>
        <begin position="128"/>
        <end position="147"/>
    </location>
</feature>
<feature type="repeat" description="4">
    <location>
        <begin position="148"/>
        <end position="167"/>
    </location>
</feature>
<feature type="repeat" description="5">
    <location>
        <begin position="217"/>
        <end position="236"/>
    </location>
</feature>
<feature type="repeat" description="6">
    <location>
        <begin position="238"/>
        <end position="257"/>
    </location>
</feature>
<feature type="region of interest" description="Disordered" evidence="2">
    <location>
        <begin position="71"/>
        <end position="265"/>
    </location>
</feature>
<feature type="region of interest" description="6 X approximate repeats">
    <location>
        <begin position="75"/>
        <end position="257"/>
    </location>
</feature>
<feature type="short sequence motif" description="Cell attachment site">
    <location>
        <begin position="25"/>
        <end position="27"/>
    </location>
</feature>
<feature type="compositionally biased region" description="Polar residues" evidence="2">
    <location>
        <begin position="73"/>
        <end position="92"/>
    </location>
</feature>
<feature type="compositionally biased region" description="Acidic residues" evidence="2">
    <location>
        <begin position="112"/>
        <end position="125"/>
    </location>
</feature>
<feature type="compositionally biased region" description="Acidic residues" evidence="2">
    <location>
        <begin position="133"/>
        <end position="144"/>
    </location>
</feature>
<feature type="compositionally biased region" description="Acidic residues" evidence="2">
    <location>
        <begin position="152"/>
        <end position="169"/>
    </location>
</feature>
<feature type="compositionally biased region" description="Acidic residues" evidence="2">
    <location>
        <begin position="194"/>
        <end position="212"/>
    </location>
</feature>
<feature type="compositionally biased region" description="Acidic residues" evidence="2">
    <location>
        <begin position="222"/>
        <end position="243"/>
    </location>
</feature>
<feature type="compositionally biased region" description="Acidic residues" evidence="2">
    <location>
        <begin position="250"/>
        <end position="265"/>
    </location>
</feature>
<feature type="glycosylation site" description="N-linked (GlcNAc...) asparagine" evidence="1">
    <location>
        <position position="228"/>
    </location>
</feature>
<feature type="non-terminal residue">
    <location>
        <position position="1"/>
    </location>
</feature>
<feature type="non-terminal residue">
    <location>
        <position position="265"/>
    </location>
</feature>